<name>ACPX_STRVG</name>
<comment type="function">
    <text>Acyl carrier protein.</text>
</comment>
<comment type="pathway">
    <text>Antifungal biosynthesis; monensin biosynthesis.</text>
</comment>
<comment type="PTM">
    <text evidence="2">4'-phosphopantetheine is transferred from CoA to a specific serine of the apo-ACP-like protein.</text>
</comment>
<feature type="chain" id="PRO_0000180250" description="Monensin polyketide synthase acyl carrier protein">
    <location>
        <begin position="1"/>
        <end position="88"/>
    </location>
</feature>
<feature type="domain" description="Carrier" evidence="1">
    <location>
        <begin position="5"/>
        <end position="82"/>
    </location>
</feature>
<feature type="modified residue" description="O-(pantetheine 4'-phosphoryl)serine" evidence="1">
    <location>
        <position position="42"/>
    </location>
</feature>
<proteinExistence type="inferred from homology"/>
<evidence type="ECO:0000255" key="1">
    <source>
        <dbReference type="PROSITE-ProRule" id="PRU00258"/>
    </source>
</evidence>
<evidence type="ECO:0000305" key="2"/>
<protein>
    <recommendedName>
        <fullName>Monensin polyketide synthase acyl carrier protein</fullName>
        <shortName>ACP</shortName>
    </recommendedName>
</protein>
<reference key="1">
    <citation type="journal article" date="1992" name="Mol. Gen. Genet.">
        <title>Characterisation of actI-homologous DNA encoding polyketide synthase genes from the monensin producer Streptomyces cinnamonensis.</title>
        <authorList>
            <person name="Arrowsmith T.J."/>
            <person name="Malpartida F."/>
            <person name="Sherman D.H."/>
            <person name="Birch A."/>
            <person name="Hopwood D.A."/>
            <person name="Robinson J.A."/>
        </authorList>
    </citation>
    <scope>NUCLEOTIDE SEQUENCE [GENOMIC DNA]</scope>
    <source>
        <strain>A3823.5</strain>
    </source>
</reference>
<keyword id="KW-0045">Antibiotic biosynthesis</keyword>
<keyword id="KW-0596">Phosphopantetheine</keyword>
<keyword id="KW-0597">Phosphoprotein</keyword>
<dbReference type="EMBL" id="Z11511">
    <property type="protein sequence ID" value="CAA77598.1"/>
    <property type="molecule type" value="Genomic_DNA"/>
</dbReference>
<dbReference type="PIR" id="S25078">
    <property type="entry name" value="S25078"/>
</dbReference>
<dbReference type="SMR" id="P41174"/>
<dbReference type="UniPathway" id="UPA00178"/>
<dbReference type="GO" id="GO:0031177">
    <property type="term" value="F:phosphopantetheine binding"/>
    <property type="evidence" value="ECO:0007669"/>
    <property type="project" value="InterPro"/>
</dbReference>
<dbReference type="GO" id="GO:0017000">
    <property type="term" value="P:antibiotic biosynthetic process"/>
    <property type="evidence" value="ECO:0007669"/>
    <property type="project" value="UniProtKB-KW"/>
</dbReference>
<dbReference type="GO" id="GO:0044550">
    <property type="term" value="P:secondary metabolite biosynthetic process"/>
    <property type="evidence" value="ECO:0007669"/>
    <property type="project" value="UniProtKB-ARBA"/>
</dbReference>
<dbReference type="Gene3D" id="1.10.1200.10">
    <property type="entry name" value="ACP-like"/>
    <property type="match status" value="1"/>
</dbReference>
<dbReference type="InterPro" id="IPR036736">
    <property type="entry name" value="ACP-like_sf"/>
</dbReference>
<dbReference type="InterPro" id="IPR020806">
    <property type="entry name" value="PKS_PP-bd"/>
</dbReference>
<dbReference type="InterPro" id="IPR009081">
    <property type="entry name" value="PP-bd_ACP"/>
</dbReference>
<dbReference type="InterPro" id="IPR006162">
    <property type="entry name" value="Ppantetheine_attach_site"/>
</dbReference>
<dbReference type="Pfam" id="PF00550">
    <property type="entry name" value="PP-binding"/>
    <property type="match status" value="1"/>
</dbReference>
<dbReference type="SMART" id="SM00823">
    <property type="entry name" value="PKS_PP"/>
    <property type="match status" value="1"/>
</dbReference>
<dbReference type="SUPFAM" id="SSF47336">
    <property type="entry name" value="ACP-like"/>
    <property type="match status" value="1"/>
</dbReference>
<dbReference type="PROSITE" id="PS50075">
    <property type="entry name" value="CARRIER"/>
    <property type="match status" value="1"/>
</dbReference>
<dbReference type="PROSITE" id="PS00012">
    <property type="entry name" value="PHOSPHOPANTETHEINE"/>
    <property type="match status" value="1"/>
</dbReference>
<accession>P41174</accession>
<organism>
    <name type="scientific">Streptomyces virginiae</name>
    <name type="common">Streptomyces cinnamonensis</name>
    <dbReference type="NCBI Taxonomy" id="1961"/>
    <lineage>
        <taxon>Bacteria</taxon>
        <taxon>Bacillati</taxon>
        <taxon>Actinomycetota</taxon>
        <taxon>Actinomycetes</taxon>
        <taxon>Kitasatosporales</taxon>
        <taxon>Streptomycetaceae</taxon>
        <taxon>Streptomyces</taxon>
    </lineage>
</organism>
<sequence>MSDRPFTLADLQRILVEAAGADESAGPDDILDTTFALLGYESLALLETGGCIEREIGISLDDDTLTDALTPRELIDHVNERLAAARVA</sequence>